<gene>
    <name evidence="1" type="primary">psmA</name>
    <name type="ordered locus">M1627_1453</name>
</gene>
<dbReference type="EMBL" id="CP001401">
    <property type="protein sequence ID" value="ACP55335.1"/>
    <property type="molecule type" value="Genomic_DNA"/>
</dbReference>
<dbReference type="RefSeq" id="WP_012711401.1">
    <property type="nucleotide sequence ID" value="NC_012632.1"/>
</dbReference>
<dbReference type="SMR" id="C3N5R0"/>
<dbReference type="GeneID" id="84061723"/>
<dbReference type="KEGG" id="sim:M1627_1453"/>
<dbReference type="HOGENOM" id="CLU_035750_4_1_2"/>
<dbReference type="Proteomes" id="UP000002307">
    <property type="component" value="Chromosome"/>
</dbReference>
<dbReference type="GO" id="GO:0005737">
    <property type="term" value="C:cytoplasm"/>
    <property type="evidence" value="ECO:0007669"/>
    <property type="project" value="UniProtKB-SubCell"/>
</dbReference>
<dbReference type="GO" id="GO:0019773">
    <property type="term" value="C:proteasome core complex, alpha-subunit complex"/>
    <property type="evidence" value="ECO:0000250"/>
    <property type="project" value="UniProtKB"/>
</dbReference>
<dbReference type="GO" id="GO:0004298">
    <property type="term" value="F:threonine-type endopeptidase activity"/>
    <property type="evidence" value="ECO:0007669"/>
    <property type="project" value="InterPro"/>
</dbReference>
<dbReference type="GO" id="GO:0010498">
    <property type="term" value="P:proteasomal protein catabolic process"/>
    <property type="evidence" value="ECO:0007669"/>
    <property type="project" value="UniProtKB-UniRule"/>
</dbReference>
<dbReference type="GO" id="GO:0006511">
    <property type="term" value="P:ubiquitin-dependent protein catabolic process"/>
    <property type="evidence" value="ECO:0007669"/>
    <property type="project" value="InterPro"/>
</dbReference>
<dbReference type="CDD" id="cd03756">
    <property type="entry name" value="proteasome_alpha_archeal"/>
    <property type="match status" value="1"/>
</dbReference>
<dbReference type="FunFam" id="3.60.20.10:FF:000004">
    <property type="entry name" value="Proteasome subunit alpha type-4"/>
    <property type="match status" value="1"/>
</dbReference>
<dbReference type="Gene3D" id="3.60.20.10">
    <property type="entry name" value="Glutamine Phosphoribosylpyrophosphate, subunit 1, domain 1"/>
    <property type="match status" value="1"/>
</dbReference>
<dbReference type="HAMAP" id="MF_00289_A">
    <property type="entry name" value="Proteasome_A_A"/>
    <property type="match status" value="1"/>
</dbReference>
<dbReference type="InterPro" id="IPR029055">
    <property type="entry name" value="Ntn_hydrolases_N"/>
</dbReference>
<dbReference type="InterPro" id="IPR050115">
    <property type="entry name" value="Proteasome_alpha"/>
</dbReference>
<dbReference type="InterPro" id="IPR023332">
    <property type="entry name" value="Proteasome_alpha-type"/>
</dbReference>
<dbReference type="InterPro" id="IPR019982">
    <property type="entry name" value="Proteasome_asu_arc"/>
</dbReference>
<dbReference type="InterPro" id="IPR000426">
    <property type="entry name" value="Proteasome_asu_N"/>
</dbReference>
<dbReference type="InterPro" id="IPR001353">
    <property type="entry name" value="Proteasome_sua/b"/>
</dbReference>
<dbReference type="NCBIfam" id="TIGR03633">
    <property type="entry name" value="arc_protsome_A"/>
    <property type="match status" value="1"/>
</dbReference>
<dbReference type="NCBIfam" id="NF003075">
    <property type="entry name" value="PRK03996.1"/>
    <property type="match status" value="1"/>
</dbReference>
<dbReference type="PANTHER" id="PTHR11599">
    <property type="entry name" value="PROTEASOME SUBUNIT ALPHA/BETA"/>
    <property type="match status" value="1"/>
</dbReference>
<dbReference type="Pfam" id="PF00227">
    <property type="entry name" value="Proteasome"/>
    <property type="match status" value="1"/>
</dbReference>
<dbReference type="Pfam" id="PF10584">
    <property type="entry name" value="Proteasome_A_N"/>
    <property type="match status" value="1"/>
</dbReference>
<dbReference type="SMART" id="SM00948">
    <property type="entry name" value="Proteasome_A_N"/>
    <property type="match status" value="1"/>
</dbReference>
<dbReference type="SUPFAM" id="SSF56235">
    <property type="entry name" value="N-terminal nucleophile aminohydrolases (Ntn hydrolases)"/>
    <property type="match status" value="1"/>
</dbReference>
<dbReference type="PROSITE" id="PS00388">
    <property type="entry name" value="PROTEASOME_ALPHA_1"/>
    <property type="match status" value="1"/>
</dbReference>
<dbReference type="PROSITE" id="PS51475">
    <property type="entry name" value="PROTEASOME_ALPHA_2"/>
    <property type="match status" value="1"/>
</dbReference>
<evidence type="ECO:0000255" key="1">
    <source>
        <dbReference type="HAMAP-Rule" id="MF_00289"/>
    </source>
</evidence>
<protein>
    <recommendedName>
        <fullName evidence="1">Proteasome subunit alpha</fullName>
    </recommendedName>
    <alternativeName>
        <fullName evidence="1">20S proteasome alpha subunit</fullName>
    </alternativeName>
    <alternativeName>
        <fullName evidence="1">Proteasome core protein PsmA</fullName>
    </alternativeName>
</protein>
<keyword id="KW-0963">Cytoplasm</keyword>
<keyword id="KW-0647">Proteasome</keyword>
<proteinExistence type="inferred from homology"/>
<name>PSA_SACI3</name>
<feature type="chain" id="PRO_1000204859" description="Proteasome subunit alpha">
    <location>
        <begin position="1"/>
        <end position="241"/>
    </location>
</feature>
<organism>
    <name type="scientific">Saccharolobus islandicus (strain M.16.27)</name>
    <name type="common">Sulfolobus islandicus</name>
    <dbReference type="NCBI Taxonomy" id="427318"/>
    <lineage>
        <taxon>Archaea</taxon>
        <taxon>Thermoproteota</taxon>
        <taxon>Thermoprotei</taxon>
        <taxon>Sulfolobales</taxon>
        <taxon>Sulfolobaceae</taxon>
        <taxon>Saccharolobus</taxon>
    </lineage>
</organism>
<comment type="function">
    <text evidence="1">Component of the proteasome core, a large protease complex with broad specificity involved in protein degradation.</text>
</comment>
<comment type="activity regulation">
    <text evidence="1">The formation of the proteasomal ATPase PAN-20S proteasome complex, via the docking of the C-termini of PAN into the intersubunit pockets in the alpha-rings, triggers opening of the gate for substrate entry. Interconversion between the open-gate and close-gate conformations leads to a dynamic regulation of the 20S proteasome proteolysis activity.</text>
</comment>
<comment type="subunit">
    <text evidence="1">The 20S proteasome core is composed of 14 alpha and 14 beta subunits that assemble into four stacked heptameric rings, resulting in a barrel-shaped structure. The two inner rings, each composed of seven catalytic beta subunits, are sandwiched by two outer rings, each composed of seven alpha subunits. The catalytic chamber with the active sites is on the inside of the barrel. Has a gated structure, the ends of the cylinder being occluded by the N-termini of the alpha-subunits. Is capped at one or both ends by the proteasome regulatory ATPase, PAN.</text>
</comment>
<comment type="subcellular location">
    <subcellularLocation>
        <location evidence="1">Cytoplasm</location>
    </subcellularLocation>
</comment>
<comment type="similarity">
    <text evidence="1">Belongs to the peptidase T1A family.</text>
</comment>
<accession>C3N5R0</accession>
<reference key="1">
    <citation type="journal article" date="2009" name="Proc. Natl. Acad. Sci. U.S.A.">
        <title>Biogeography of the Sulfolobus islandicus pan-genome.</title>
        <authorList>
            <person name="Reno M.L."/>
            <person name="Held N.L."/>
            <person name="Fields C.J."/>
            <person name="Burke P.V."/>
            <person name="Whitaker R.J."/>
        </authorList>
    </citation>
    <scope>NUCLEOTIDE SEQUENCE [LARGE SCALE GENOMIC DNA]</scope>
    <source>
        <strain>M.16.27</strain>
    </source>
</reference>
<sequence length="241" mass="26535">MAFGPAAMGYDRAITIFSPDGSLYQVDYAFEAVKKGWTAIGIKSKSGVVIASEKRKAQSLLDVDSIEKVFLIDDHVGCSFAGLASDGRVLIDYARNIALQHRLIYDEPVSIDYLTKSVADVKQMYTQHGGVRPFGVALVIAGIDKSVPKLYMTEPSGQYMPYQAVAIGQGYYTATEFLEKNYKEDLTIEDTILLALKALSATLKPNEKLTPNTVEIGYASTQTGLFLKMTSEDKNMYLQKL</sequence>